<feature type="chain" id="PRO_0000104532" description="Serpentine receptor class delta-59">
    <location>
        <begin position="1"/>
        <end position="325"/>
    </location>
</feature>
<feature type="transmembrane region" description="Helical" evidence="1">
    <location>
        <begin position="14"/>
        <end position="34"/>
    </location>
</feature>
<feature type="transmembrane region" description="Helical" evidence="1">
    <location>
        <begin position="45"/>
        <end position="65"/>
    </location>
</feature>
<feature type="transmembrane region" description="Helical" evidence="1">
    <location>
        <begin position="75"/>
        <end position="95"/>
    </location>
</feature>
<feature type="transmembrane region" description="Helical" evidence="1">
    <location>
        <begin position="97"/>
        <end position="117"/>
    </location>
</feature>
<feature type="transmembrane region" description="Helical" evidence="1">
    <location>
        <begin position="132"/>
        <end position="152"/>
    </location>
</feature>
<feature type="transmembrane region" description="Helical" evidence="1">
    <location>
        <begin position="190"/>
        <end position="210"/>
    </location>
</feature>
<feature type="transmembrane region" description="Helical" evidence="1">
    <location>
        <begin position="235"/>
        <end position="255"/>
    </location>
</feature>
<feature type="transmembrane region" description="Helical" evidence="1">
    <location>
        <begin position="275"/>
        <end position="295"/>
    </location>
</feature>
<keyword id="KW-0472">Membrane</keyword>
<keyword id="KW-1185">Reference proteome</keyword>
<keyword id="KW-0812">Transmembrane</keyword>
<keyword id="KW-1133">Transmembrane helix</keyword>
<dbReference type="EMBL" id="FO080696">
    <property type="protein sequence ID" value="CCD65897.1"/>
    <property type="molecule type" value="Genomic_DNA"/>
</dbReference>
<dbReference type="PIR" id="T15909">
    <property type="entry name" value="T15909"/>
</dbReference>
<dbReference type="RefSeq" id="NP_495499.1">
    <property type="nucleotide sequence ID" value="NM_063098.2"/>
</dbReference>
<dbReference type="SMR" id="Q19061"/>
<dbReference type="FunCoup" id="Q19061">
    <property type="interactions" value="4"/>
</dbReference>
<dbReference type="PaxDb" id="6239-E04F6.1"/>
<dbReference type="EnsemblMetazoa" id="E04F6.1.1">
    <property type="protein sequence ID" value="E04F6.1.1"/>
    <property type="gene ID" value="WBGene00005136"/>
</dbReference>
<dbReference type="GeneID" id="191820"/>
<dbReference type="KEGG" id="cel:CELE_E04F6.1"/>
<dbReference type="UCSC" id="E04F6.1">
    <property type="organism name" value="c. elegans"/>
</dbReference>
<dbReference type="AGR" id="WB:WBGene00005136"/>
<dbReference type="CTD" id="191820"/>
<dbReference type="WormBase" id="E04F6.1">
    <property type="protein sequence ID" value="CE20648"/>
    <property type="gene ID" value="WBGene00005136"/>
    <property type="gene designation" value="srd-59"/>
</dbReference>
<dbReference type="eggNOG" id="ENOG502TGF5">
    <property type="taxonomic scope" value="Eukaryota"/>
</dbReference>
<dbReference type="GeneTree" id="ENSGT00970000195825"/>
<dbReference type="HOGENOM" id="CLU_057924_2_1_1"/>
<dbReference type="InParanoid" id="Q19061"/>
<dbReference type="OMA" id="WDFESAQ"/>
<dbReference type="OrthoDB" id="5785156at2759"/>
<dbReference type="PhylomeDB" id="Q19061"/>
<dbReference type="PRO" id="PR:Q19061"/>
<dbReference type="Proteomes" id="UP000001940">
    <property type="component" value="Chromosome II"/>
</dbReference>
<dbReference type="GO" id="GO:0016020">
    <property type="term" value="C:membrane"/>
    <property type="evidence" value="ECO:0007669"/>
    <property type="project" value="UniProtKB-SubCell"/>
</dbReference>
<dbReference type="InterPro" id="IPR019421">
    <property type="entry name" value="7TM_GPCR_serpentine_rcpt_Srd"/>
</dbReference>
<dbReference type="InterPro" id="IPR050920">
    <property type="entry name" value="Nematode_rcpt-like_delta"/>
</dbReference>
<dbReference type="PANTHER" id="PTHR22945:SF89">
    <property type="entry name" value="SERPENTINE RECEPTOR, CLASS D (DELTA)-RELATED"/>
    <property type="match status" value="1"/>
</dbReference>
<dbReference type="PANTHER" id="PTHR22945">
    <property type="entry name" value="SERPENTINE RECEPTOR, CLASS D DELTA"/>
    <property type="match status" value="1"/>
</dbReference>
<dbReference type="Pfam" id="PF10317">
    <property type="entry name" value="7TM_GPCR_Srd"/>
    <property type="match status" value="1"/>
</dbReference>
<dbReference type="SUPFAM" id="SSF81321">
    <property type="entry name" value="Family A G protein-coupled receptor-like"/>
    <property type="match status" value="1"/>
</dbReference>
<accession>Q19061</accession>
<organism>
    <name type="scientific">Caenorhabditis elegans</name>
    <dbReference type="NCBI Taxonomy" id="6239"/>
    <lineage>
        <taxon>Eukaryota</taxon>
        <taxon>Metazoa</taxon>
        <taxon>Ecdysozoa</taxon>
        <taxon>Nematoda</taxon>
        <taxon>Chromadorea</taxon>
        <taxon>Rhabditida</taxon>
        <taxon>Rhabditina</taxon>
        <taxon>Rhabditomorpha</taxon>
        <taxon>Rhabditoidea</taxon>
        <taxon>Rhabditidae</taxon>
        <taxon>Peloderinae</taxon>
        <taxon>Caenorhabditis</taxon>
    </lineage>
</organism>
<protein>
    <recommendedName>
        <fullName>Serpentine receptor class delta-59</fullName>
        <shortName>Protein srd-59</shortName>
    </recommendedName>
</protein>
<sequence length="325" mass="36419">MCSNSNCYVPFFNWYWPFCGVLAIIFQTILLHLISHKSPATLDGLKIFLYNTSCVQIALITFAFLSQHRLLTNSISAAVLSLGPCSYVSPTTCFINYHVFMATSFGAGSAIAITVLFRFFVLVQNQVHTNQTYIMVLASYIAPLVVLIIPFTDKWDFESAQASTALEHPSYNLSIYYPYSGFSNAGSPQFLSATLLLSIGAYGIPIGCLILTRKVLILIRYHSHMSERTKKQAQTLIHGLIVQSMLPFISYIPSFSGYIYTQSTGRELLICEHLILVSSAFPALLDPFISFYFIVPYRQAIIEWVLPKRQQRITTVTSNSTSGFN</sequence>
<reference key="1">
    <citation type="journal article" date="1998" name="Science">
        <title>Genome sequence of the nematode C. elegans: a platform for investigating biology.</title>
        <authorList>
            <consortium name="The C. elegans sequencing consortium"/>
        </authorList>
    </citation>
    <scope>NUCLEOTIDE SEQUENCE [LARGE SCALE GENOMIC DNA]</scope>
    <source>
        <strain>Bristol N2</strain>
    </source>
</reference>
<evidence type="ECO:0000255" key="1"/>
<evidence type="ECO:0000305" key="2"/>
<comment type="subcellular location">
    <subcellularLocation>
        <location evidence="2">Membrane</location>
        <topology evidence="2">Multi-pass membrane protein</topology>
    </subcellularLocation>
</comment>
<comment type="similarity">
    <text evidence="2">Belongs to the nematode receptor-like protein srd family.</text>
</comment>
<proteinExistence type="inferred from homology"/>
<gene>
    <name type="primary">srd-59</name>
    <name type="ORF">E04F6.1</name>
</gene>
<name>SRD59_CAEEL</name>